<feature type="chain" id="PRO_0000325887" description="2-oxoglutarate and iron-dependent oxygenase domain-containing protein 3">
    <location>
        <begin position="1"/>
        <end position="315"/>
    </location>
</feature>
<feature type="topological domain" description="Cytoplasmic" evidence="2">
    <location>
        <begin position="1"/>
        <end position="41"/>
    </location>
</feature>
<feature type="transmembrane region" description="Helical; Signal-anchor for type II membrane protein" evidence="2">
    <location>
        <begin position="42"/>
        <end position="62"/>
    </location>
</feature>
<feature type="topological domain" description="Lumenal" evidence="2">
    <location>
        <begin position="63"/>
        <end position="315"/>
    </location>
</feature>
<feature type="domain" description="Fe2OG dioxygenase" evidence="3">
    <location>
        <begin position="203"/>
        <end position="305"/>
    </location>
</feature>
<feature type="region of interest" description="Disordered" evidence="4">
    <location>
        <begin position="1"/>
        <end position="32"/>
    </location>
</feature>
<feature type="compositionally biased region" description="Basic and acidic residues" evidence="4">
    <location>
        <begin position="18"/>
        <end position="32"/>
    </location>
</feature>
<feature type="active site" evidence="2">
    <location>
        <position position="294"/>
    </location>
</feature>
<feature type="binding site" evidence="3">
    <location>
        <position position="226"/>
    </location>
    <ligand>
        <name>Fe cation</name>
        <dbReference type="ChEBI" id="CHEBI:24875"/>
    </ligand>
</feature>
<feature type="binding site" evidence="3">
    <location>
        <position position="228"/>
    </location>
    <ligand>
        <name>Fe cation</name>
        <dbReference type="ChEBI" id="CHEBI:24875"/>
    </ligand>
</feature>
<feature type="binding site" evidence="3">
    <location>
        <position position="284"/>
    </location>
    <ligand>
        <name>Fe cation</name>
        <dbReference type="ChEBI" id="CHEBI:24875"/>
    </ligand>
</feature>
<feature type="binding site" evidence="3">
    <location>
        <position position="294"/>
    </location>
    <ligand>
        <name>2-oxoglutarate</name>
        <dbReference type="ChEBI" id="CHEBI:16810"/>
    </ligand>
</feature>
<feature type="glycosylation site" description="N-linked (GlcNAc...) asparagine" evidence="2">
    <location>
        <position position="211"/>
    </location>
</feature>
<feature type="glycosylation site" description="N-linked (GlcNAc...) asparagine" evidence="2">
    <location>
        <position position="263"/>
    </location>
</feature>
<reference key="1">
    <citation type="journal article" date="2004" name="Genome Res.">
        <title>The status, quality, and expansion of the NIH full-length cDNA project: the Mammalian Gene Collection (MGC).</title>
        <authorList>
            <consortium name="The MGC Project Team"/>
        </authorList>
    </citation>
    <scope>NUCLEOTIDE SEQUENCE [LARGE SCALE MRNA]</scope>
    <source>
        <tissue>Liver</tissue>
    </source>
</reference>
<evidence type="ECO:0000250" key="1"/>
<evidence type="ECO:0000255" key="2"/>
<evidence type="ECO:0000255" key="3">
    <source>
        <dbReference type="PROSITE-ProRule" id="PRU00805"/>
    </source>
</evidence>
<evidence type="ECO:0000256" key="4">
    <source>
        <dbReference type="SAM" id="MobiDB-lite"/>
    </source>
</evidence>
<evidence type="ECO:0000305" key="5"/>
<gene>
    <name type="primary">Ogfod3</name>
</gene>
<name>OGFD3_RAT</name>
<comment type="cofactor">
    <cofactor evidence="3">
        <name>Fe(2+)</name>
        <dbReference type="ChEBI" id="CHEBI:29033"/>
    </cofactor>
    <text evidence="3">Binds 1 Fe(2+) ion per subunit.</text>
</comment>
<comment type="cofactor">
    <cofactor evidence="1">
        <name>L-ascorbate</name>
        <dbReference type="ChEBI" id="CHEBI:38290"/>
    </cofactor>
</comment>
<comment type="subcellular location">
    <subcellularLocation>
        <location evidence="5">Membrane</location>
        <topology evidence="5">Single-pass type II membrane protein</topology>
    </subcellularLocation>
</comment>
<comment type="similarity">
    <text evidence="5">Belongs to the OGFOD3 family.</text>
</comment>
<sequence>MAPQRRGPPRVPEGNSAAERRHANSTKKDRLPQEAQRTWLRIVALGVSLALVTFLLWSSAGIDDDVAEVVAHRGEVLEGRFIEVPCSEDYDGHRRFEGCTPRKCGRGVTDIVITREEAEQIRRIAEKGLSLGGSDGGASILDLHSGALSVGKHFVNLYRYFGDKIQTIFSEEDFQLYRDIRQKVQLTIAEAFGIRASLLYLTKPTFFSRINSTEAQTAHDEYWHAHVDKVTYGSFDYTSLLYLSDYLEDFGGGRFVFMEEGSNKTVEPRAGRVSFFTSGSENLHRVEKVLWGTRYAITIAFTCNPDHGIEDPVLT</sequence>
<protein>
    <recommendedName>
        <fullName>2-oxoglutarate and iron-dependent oxygenase domain-containing protein 3</fullName>
        <ecNumber>1.14.11.-</ecNumber>
    </recommendedName>
</protein>
<dbReference type="EC" id="1.14.11.-"/>
<dbReference type="EMBL" id="BC088238">
    <property type="protein sequence ID" value="AAH88238.1"/>
    <property type="molecule type" value="mRNA"/>
</dbReference>
<dbReference type="RefSeq" id="NP_001013998.1">
    <property type="nucleotide sequence ID" value="NM_001013976.1"/>
</dbReference>
<dbReference type="SMR" id="Q5M843"/>
<dbReference type="FunCoup" id="Q5M843">
    <property type="interactions" value="493"/>
</dbReference>
<dbReference type="IntAct" id="Q5M843">
    <property type="interactions" value="1"/>
</dbReference>
<dbReference type="STRING" id="10116.ENSRNOP00000051808"/>
<dbReference type="GlyCosmos" id="Q5M843">
    <property type="glycosylation" value="2 sites, No reported glycans"/>
</dbReference>
<dbReference type="GlyGen" id="Q5M843">
    <property type="glycosylation" value="2 sites"/>
</dbReference>
<dbReference type="PhosphoSitePlus" id="Q5M843"/>
<dbReference type="PaxDb" id="10116-ENSRNOP00000051808"/>
<dbReference type="Ensembl" id="ENSRNOT00000054925.3">
    <property type="protein sequence ID" value="ENSRNOP00000051808.2"/>
    <property type="gene ID" value="ENSRNOG00000036668.3"/>
</dbReference>
<dbReference type="GeneID" id="303749"/>
<dbReference type="KEGG" id="rno:303749"/>
<dbReference type="AGR" id="RGD:1305007"/>
<dbReference type="CTD" id="79701"/>
<dbReference type="RGD" id="1305007">
    <property type="gene designation" value="Ogfod3"/>
</dbReference>
<dbReference type="eggNOG" id="ENOG502QR2P">
    <property type="taxonomic scope" value="Eukaryota"/>
</dbReference>
<dbReference type="GeneTree" id="ENSGT00390000005895"/>
<dbReference type="HOGENOM" id="CLU_042482_0_0_1"/>
<dbReference type="InParanoid" id="Q5M843"/>
<dbReference type="OMA" id="YESFHYT"/>
<dbReference type="OrthoDB" id="427071at2759"/>
<dbReference type="PhylomeDB" id="Q5M843"/>
<dbReference type="TreeFam" id="TF329031"/>
<dbReference type="PRO" id="PR:Q5M843"/>
<dbReference type="Proteomes" id="UP000002494">
    <property type="component" value="Chromosome 10"/>
</dbReference>
<dbReference type="Bgee" id="ENSRNOG00000036668">
    <property type="expression patterns" value="Expressed in ovary and 19 other cell types or tissues"/>
</dbReference>
<dbReference type="GO" id="GO:0016020">
    <property type="term" value="C:membrane"/>
    <property type="evidence" value="ECO:0007669"/>
    <property type="project" value="UniProtKB-SubCell"/>
</dbReference>
<dbReference type="GO" id="GO:0051213">
    <property type="term" value="F:dioxygenase activity"/>
    <property type="evidence" value="ECO:0007669"/>
    <property type="project" value="UniProtKB-KW"/>
</dbReference>
<dbReference type="GO" id="GO:0005506">
    <property type="term" value="F:iron ion binding"/>
    <property type="evidence" value="ECO:0007669"/>
    <property type="project" value="InterPro"/>
</dbReference>
<dbReference type="GO" id="GO:0031418">
    <property type="term" value="F:L-ascorbic acid binding"/>
    <property type="evidence" value="ECO:0007669"/>
    <property type="project" value="UniProtKB-KW"/>
</dbReference>
<dbReference type="GO" id="GO:0016705">
    <property type="term" value="F:oxidoreductase activity, acting on paired donors, with incorporation or reduction of molecular oxygen"/>
    <property type="evidence" value="ECO:0007669"/>
    <property type="project" value="InterPro"/>
</dbReference>
<dbReference type="FunFam" id="2.60.120.620:FF:000019">
    <property type="entry name" value="2-oxoglutarate and iron-dependent oxygenase domain-containing protein 3"/>
    <property type="match status" value="1"/>
</dbReference>
<dbReference type="Gene3D" id="2.60.120.620">
    <property type="entry name" value="q2cbj1_9rhob like domain"/>
    <property type="match status" value="1"/>
</dbReference>
<dbReference type="InterPro" id="IPR039210">
    <property type="entry name" value="OGFOD3"/>
</dbReference>
<dbReference type="InterPro" id="IPR005123">
    <property type="entry name" value="Oxoglu/Fe-dep_dioxygenase_dom"/>
</dbReference>
<dbReference type="InterPro" id="IPR006620">
    <property type="entry name" value="Pro_4_hyd_alph"/>
</dbReference>
<dbReference type="InterPro" id="IPR044862">
    <property type="entry name" value="Pro_4_hyd_alph_FE2OG_OXY"/>
</dbReference>
<dbReference type="PANTHER" id="PTHR14650:SF1">
    <property type="entry name" value="2-OXOGLUTARATE AND IRON-DEPENDENT OXYGENASE DOMAIN-CONTAINING PROTEIN 3"/>
    <property type="match status" value="1"/>
</dbReference>
<dbReference type="PANTHER" id="PTHR14650">
    <property type="entry name" value="PROLYL HYDROXYLASE-RELATED"/>
    <property type="match status" value="1"/>
</dbReference>
<dbReference type="Pfam" id="PF13640">
    <property type="entry name" value="2OG-FeII_Oxy_3"/>
    <property type="match status" value="1"/>
</dbReference>
<dbReference type="SMART" id="SM00702">
    <property type="entry name" value="P4Hc"/>
    <property type="match status" value="1"/>
</dbReference>
<dbReference type="PROSITE" id="PS51471">
    <property type="entry name" value="FE2OG_OXY"/>
    <property type="match status" value="1"/>
</dbReference>
<proteinExistence type="evidence at transcript level"/>
<accession>Q5M843</accession>
<organism>
    <name type="scientific">Rattus norvegicus</name>
    <name type="common">Rat</name>
    <dbReference type="NCBI Taxonomy" id="10116"/>
    <lineage>
        <taxon>Eukaryota</taxon>
        <taxon>Metazoa</taxon>
        <taxon>Chordata</taxon>
        <taxon>Craniata</taxon>
        <taxon>Vertebrata</taxon>
        <taxon>Euteleostomi</taxon>
        <taxon>Mammalia</taxon>
        <taxon>Eutheria</taxon>
        <taxon>Euarchontoglires</taxon>
        <taxon>Glires</taxon>
        <taxon>Rodentia</taxon>
        <taxon>Myomorpha</taxon>
        <taxon>Muroidea</taxon>
        <taxon>Muridae</taxon>
        <taxon>Murinae</taxon>
        <taxon>Rattus</taxon>
    </lineage>
</organism>
<keyword id="KW-0223">Dioxygenase</keyword>
<keyword id="KW-0325">Glycoprotein</keyword>
<keyword id="KW-0408">Iron</keyword>
<keyword id="KW-0472">Membrane</keyword>
<keyword id="KW-0479">Metal-binding</keyword>
<keyword id="KW-0560">Oxidoreductase</keyword>
<keyword id="KW-1185">Reference proteome</keyword>
<keyword id="KW-0735">Signal-anchor</keyword>
<keyword id="KW-0812">Transmembrane</keyword>
<keyword id="KW-1133">Transmembrane helix</keyword>
<keyword id="KW-0847">Vitamin C</keyword>